<reference key="1">
    <citation type="book" date="2006" name="Gram positive pathogens, 2nd edition">
        <title>The Staphylococcus aureus NCTC 8325 genome.</title>
        <editorList>
            <person name="Fischetti V."/>
            <person name="Novick R."/>
            <person name="Ferretti J."/>
            <person name="Portnoy D."/>
            <person name="Rood J."/>
        </editorList>
        <authorList>
            <person name="Gillaspy A.F."/>
            <person name="Worrell V."/>
            <person name="Orvis J."/>
            <person name="Roe B.A."/>
            <person name="Dyer D.W."/>
            <person name="Iandolo J.J."/>
        </authorList>
    </citation>
    <scope>NUCLEOTIDE SEQUENCE [LARGE SCALE GENOMIC DNA]</scope>
    <source>
        <strain>NCTC 8325 / PS 47</strain>
    </source>
</reference>
<feature type="chain" id="PRO_0000252944" description="Fluoride-specific ion channel FluC 2">
    <location>
        <begin position="1"/>
        <end position="117"/>
    </location>
</feature>
<feature type="transmembrane region" description="Helical" evidence="1">
    <location>
        <begin position="1"/>
        <end position="21"/>
    </location>
</feature>
<feature type="transmembrane region" description="Helical" evidence="1">
    <location>
        <begin position="46"/>
        <end position="66"/>
    </location>
</feature>
<feature type="transmembrane region" description="Helical" evidence="1">
    <location>
        <begin position="95"/>
        <end position="115"/>
    </location>
</feature>
<feature type="binding site" evidence="1">
    <location>
        <position position="71"/>
    </location>
    <ligand>
        <name>Na(+)</name>
        <dbReference type="ChEBI" id="CHEBI:29101"/>
        <note>structural</note>
    </ligand>
</feature>
<feature type="binding site" evidence="1">
    <location>
        <position position="74"/>
    </location>
    <ligand>
        <name>Na(+)</name>
        <dbReference type="ChEBI" id="CHEBI:29101"/>
        <note>structural</note>
    </ligand>
</feature>
<name>FLUC2_STAA8</name>
<comment type="function">
    <text evidence="1">Fluoride-specific ion channel. Important for reducing fluoride concentration in the cell, thus reducing its toxicity.</text>
</comment>
<comment type="catalytic activity">
    <reaction evidence="1">
        <text>fluoride(in) = fluoride(out)</text>
        <dbReference type="Rhea" id="RHEA:76159"/>
        <dbReference type="ChEBI" id="CHEBI:17051"/>
    </reaction>
    <physiologicalReaction direction="left-to-right" evidence="1">
        <dbReference type="Rhea" id="RHEA:76160"/>
    </physiologicalReaction>
</comment>
<comment type="activity regulation">
    <text evidence="1">Na(+) is not transported, but it plays an essential structural role and its presence is essential for fluoride channel function.</text>
</comment>
<comment type="subcellular location">
    <subcellularLocation>
        <location evidence="1">Cell membrane</location>
        <topology evidence="1">Multi-pass membrane protein</topology>
    </subcellularLocation>
</comment>
<comment type="similarity">
    <text evidence="1">Belongs to the fluoride channel Fluc/FEX (TC 1.A.43) family.</text>
</comment>
<protein>
    <recommendedName>
        <fullName evidence="1">Fluoride-specific ion channel FluC 2</fullName>
    </recommendedName>
</protein>
<sequence>MISIILVMIGGGFGAIARSAITDYFNHKFTSKLPIATLIVNLVGSFLIGLTIGLSISISWFPAFFVTGFLGGLTTFSTLAKELTLMMTPKFNINLFLNYSLLQFIIGFIACYIGYHI</sequence>
<accession>Q2FXE5</accession>
<proteinExistence type="inferred from homology"/>
<keyword id="KW-1003">Cell membrane</keyword>
<keyword id="KW-0407">Ion channel</keyword>
<keyword id="KW-0406">Ion transport</keyword>
<keyword id="KW-0472">Membrane</keyword>
<keyword id="KW-0479">Metal-binding</keyword>
<keyword id="KW-1185">Reference proteome</keyword>
<keyword id="KW-0915">Sodium</keyword>
<keyword id="KW-0812">Transmembrane</keyword>
<keyword id="KW-1133">Transmembrane helix</keyword>
<keyword id="KW-0813">Transport</keyword>
<organism>
    <name type="scientific">Staphylococcus aureus (strain NCTC 8325 / PS 47)</name>
    <dbReference type="NCBI Taxonomy" id="93061"/>
    <lineage>
        <taxon>Bacteria</taxon>
        <taxon>Bacillati</taxon>
        <taxon>Bacillota</taxon>
        <taxon>Bacilli</taxon>
        <taxon>Bacillales</taxon>
        <taxon>Staphylococcaceae</taxon>
        <taxon>Staphylococcus</taxon>
    </lineage>
</organism>
<gene>
    <name evidence="1" type="primary">fluC2</name>
    <name evidence="1" type="synonym">crcB2</name>
    <name type="ordered locus">SAOUHSC_01904</name>
</gene>
<evidence type="ECO:0000255" key="1">
    <source>
        <dbReference type="HAMAP-Rule" id="MF_00454"/>
    </source>
</evidence>
<dbReference type="EMBL" id="CP000253">
    <property type="protein sequence ID" value="ABD30967.1"/>
    <property type="molecule type" value="Genomic_DNA"/>
</dbReference>
<dbReference type="RefSeq" id="WP_000623471.1">
    <property type="nucleotide sequence ID" value="NZ_LS483365.1"/>
</dbReference>
<dbReference type="RefSeq" id="YP_500405.1">
    <property type="nucleotide sequence ID" value="NC_007795.1"/>
</dbReference>
<dbReference type="SMR" id="Q2FXE5"/>
<dbReference type="STRING" id="93061.SAOUHSC_01904"/>
<dbReference type="PaxDb" id="1280-SAXN108_1814"/>
<dbReference type="GeneID" id="3920851"/>
<dbReference type="KEGG" id="sao:SAOUHSC_01904"/>
<dbReference type="PATRIC" id="fig|93061.5.peg.1733"/>
<dbReference type="eggNOG" id="COG0239">
    <property type="taxonomic scope" value="Bacteria"/>
</dbReference>
<dbReference type="HOGENOM" id="CLU_114342_2_3_9"/>
<dbReference type="OrthoDB" id="9815830at2"/>
<dbReference type="PRO" id="PR:Q2FXE5"/>
<dbReference type="Proteomes" id="UP000008816">
    <property type="component" value="Chromosome"/>
</dbReference>
<dbReference type="GO" id="GO:0005886">
    <property type="term" value="C:plasma membrane"/>
    <property type="evidence" value="ECO:0000318"/>
    <property type="project" value="GO_Central"/>
</dbReference>
<dbReference type="GO" id="GO:0062054">
    <property type="term" value="F:fluoride channel activity"/>
    <property type="evidence" value="ECO:0007669"/>
    <property type="project" value="UniProtKB-UniRule"/>
</dbReference>
<dbReference type="GO" id="GO:1903425">
    <property type="term" value="F:fluoride transmembrane transporter activity"/>
    <property type="evidence" value="ECO:0000318"/>
    <property type="project" value="GO_Central"/>
</dbReference>
<dbReference type="GO" id="GO:0046872">
    <property type="term" value="F:metal ion binding"/>
    <property type="evidence" value="ECO:0007669"/>
    <property type="project" value="UniProtKB-KW"/>
</dbReference>
<dbReference type="GO" id="GO:0140114">
    <property type="term" value="P:cellular detoxification of fluoride"/>
    <property type="evidence" value="ECO:0007669"/>
    <property type="project" value="UniProtKB-UniRule"/>
</dbReference>
<dbReference type="GO" id="GO:1903424">
    <property type="term" value="P:fluoride transmembrane transport"/>
    <property type="evidence" value="ECO:0000318"/>
    <property type="project" value="GO_Central"/>
</dbReference>
<dbReference type="HAMAP" id="MF_00454">
    <property type="entry name" value="FluC"/>
    <property type="match status" value="1"/>
</dbReference>
<dbReference type="InterPro" id="IPR003691">
    <property type="entry name" value="FluC"/>
</dbReference>
<dbReference type="PANTHER" id="PTHR28259">
    <property type="entry name" value="FLUORIDE EXPORT PROTEIN 1-RELATED"/>
    <property type="match status" value="1"/>
</dbReference>
<dbReference type="PANTHER" id="PTHR28259:SF16">
    <property type="entry name" value="FLUORIDE-SPECIFIC ION CHANNEL FLUC 2"/>
    <property type="match status" value="1"/>
</dbReference>
<dbReference type="Pfam" id="PF02537">
    <property type="entry name" value="CRCB"/>
    <property type="match status" value="1"/>
</dbReference>